<comment type="function">
    <text evidence="1">Pyruvate carboxylase catalyzes a 2-step reaction, involving the ATP-dependent carboxylation of the covalently attached biotin in the first step and the transfer of the carboxyl group to pyruvate in the second.</text>
</comment>
<comment type="catalytic activity">
    <reaction>
        <text>hydrogencarbonate + pyruvate + ATP = oxaloacetate + ADP + phosphate + H(+)</text>
        <dbReference type="Rhea" id="RHEA:20844"/>
        <dbReference type="ChEBI" id="CHEBI:15361"/>
        <dbReference type="ChEBI" id="CHEBI:15378"/>
        <dbReference type="ChEBI" id="CHEBI:16452"/>
        <dbReference type="ChEBI" id="CHEBI:17544"/>
        <dbReference type="ChEBI" id="CHEBI:30616"/>
        <dbReference type="ChEBI" id="CHEBI:43474"/>
        <dbReference type="ChEBI" id="CHEBI:456216"/>
        <dbReference type="EC" id="6.4.1.1"/>
    </reaction>
</comment>
<comment type="cofactor">
    <cofactor evidence="1">
        <name>biotin</name>
        <dbReference type="ChEBI" id="CHEBI:57586"/>
    </cofactor>
</comment>
<comment type="cofactor">
    <cofactor evidence="1">
        <name>Zn(2+)</name>
        <dbReference type="ChEBI" id="CHEBI:29105"/>
    </cofactor>
</comment>
<comment type="pathway">
    <text>Carbohydrate biosynthesis; gluconeogenesis.</text>
</comment>
<comment type="subcellular location">
    <subcellularLocation>
        <location evidence="1">Cytoplasm</location>
    </subcellularLocation>
</comment>
<sequence>MAAPRQPEEAVDDTEFIDDHHDQHRDSVHTRLRANSAIMQFQKILVANRGEIPIRIFRTAHELSLQTVAVYSHEDHLSMHRQKADEAYMIGKRGQYTPVGAYLAIDEIVKIALEHGVHLIHPGYGFLSENAEFARKVEQSGMVFVGPTPQTIESLGDKVSARQLAIRCDVPVVPGTPGPVERYEEVKAFTDTYGFPIIIKAAFGGGGRGMRVVRDQAELRDSFERATSEARSAFGNGTVFVERFLDRPKHIEVQLLGDNHGNVVHLFERDCSVQRRHQKVVEIAPAKDLPADVRDRILADAVKLAKSVNYRNAGTAEFLVDQQNRYYFIEINPRIQVEHTITEEITGIDIVAAQIQIAAGATLEQLGLTQDRISTRGFAIQCRITTEDPSKGFSPDTGKIEVYRSAGGNGVRLDGGNGFAGAIITPHYDSMLVKCTCRGSTYEIARRKVVRALVEFRIRGVKTNIPFLTSLLSHPVFVDGTCWTTFIDDTPELFALVGSQNRAQKLLAYLGDVAVNGSSIKGQIGEPKLKGDIIKPVLHDAAGKPLDVSVPATKGWKQILDSEGPEAFARAVRANKGCLIMDTTWRDAHQSLLATRVRTIDLLNIAHETSHALANAYSLECWGGATFDVAMRFLYEDPWDRLRKLRKAVPNIPFQMLLRGANGVAYSSLPDNAIYHFCKQAKKCGVDIFRVFDALNDVDQLEVGIKAVHAAEGVVEATICYSGDMLNPSKKYNLPYYLDLVDKVVQFKPHVLGIKDMAGVLKPQAARLLIGSIRERYPDLPIHVHTHDSAGTGVASMIACAQAGADAVDAATDSLSGMTSQPSIGAILASLEGTEHDPGLNSAQVRALDTYWAQLRLLYSPFEAGLTGPDPEVYEHEIPGGQLTNLIFQASQLGLGQQWAETKKAYESANDLLGDVVKVTPTSKVVGDLAQFMVSNKLTAEDVIARAGELDFPGSVLEFLEGLMGQPYGGFPEPLRSRALRDRRKLDKRPGLYLEPLDLAKIKSQIRENYGAATEYDVASYAMYPKVFEDYKKFVAKFGDLSVLPTRYFLAKPEIGEEFHVELEKGKVLILKLLAIGPLSEQTGQREVFYEVNGEVRQVSVDDKKASVENTARPKAELGDSSQVGAPMSGVVVEIRVHDGLEVKKGDPIAVLSAMKMEMVISAPHSGKVSSLLVKEGDSVDGQDLVCKIVKA</sequence>
<reference key="1">
    <citation type="submission" date="1998-07" db="EMBL/GenBank/DDBJ databases">
        <title>Aspergillus niger pyruvate carboxylase.</title>
        <authorList>
            <person name="Panneman H."/>
            <person name="Ruijter G.J.G."/>
            <person name="Van den Broeck H.C."/>
            <person name="Visser J."/>
        </authorList>
    </citation>
    <scope>NUCLEOTIDE SEQUENCE [GENOMIC DNA]</scope>
    <source>
        <strain>ATCC 9029 / NRRL 3 / CBS 120.49 / DSM 2466 / N400 / FGSC 732</strain>
    </source>
</reference>
<organism>
    <name type="scientific">Aspergillus niger</name>
    <dbReference type="NCBI Taxonomy" id="5061"/>
    <lineage>
        <taxon>Eukaryota</taxon>
        <taxon>Fungi</taxon>
        <taxon>Dikarya</taxon>
        <taxon>Ascomycota</taxon>
        <taxon>Pezizomycotina</taxon>
        <taxon>Eurotiomycetes</taxon>
        <taxon>Eurotiomycetidae</taxon>
        <taxon>Eurotiales</taxon>
        <taxon>Aspergillaceae</taxon>
        <taxon>Aspergillus</taxon>
        <taxon>Aspergillus subgen. Circumdati</taxon>
    </lineage>
</organism>
<gene>
    <name type="primary">pyc</name>
</gene>
<feature type="chain" id="PRO_0000146819" description="Pyruvate carboxylase">
    <location>
        <begin position="1"/>
        <end position="1192"/>
    </location>
</feature>
<feature type="domain" description="Biotin carboxylation">
    <location>
        <begin position="40"/>
        <end position="492"/>
    </location>
</feature>
<feature type="domain" description="ATP-grasp" evidence="2">
    <location>
        <begin position="162"/>
        <end position="359"/>
    </location>
</feature>
<feature type="domain" description="Pyruvate carboxyltransferase" evidence="4">
    <location>
        <begin position="578"/>
        <end position="846"/>
    </location>
</feature>
<feature type="domain" description="Biotinyl-binding" evidence="3">
    <location>
        <begin position="1115"/>
        <end position="1190"/>
    </location>
</feature>
<feature type="region of interest" description="Disordered" evidence="5">
    <location>
        <begin position="1"/>
        <end position="23"/>
    </location>
</feature>
<feature type="active site" evidence="1">
    <location>
        <position position="334"/>
    </location>
</feature>
<feature type="binding site" evidence="1">
    <location>
        <position position="158"/>
    </location>
    <ligand>
        <name>ATP</name>
        <dbReference type="ChEBI" id="CHEBI:30616"/>
    </ligand>
</feature>
<feature type="binding site" evidence="1">
    <location>
        <position position="242"/>
    </location>
    <ligand>
        <name>ATP</name>
        <dbReference type="ChEBI" id="CHEBI:30616"/>
    </ligand>
</feature>
<feature type="binding site" evidence="1">
    <location>
        <position position="277"/>
    </location>
    <ligand>
        <name>ATP</name>
        <dbReference type="ChEBI" id="CHEBI:30616"/>
    </ligand>
</feature>
<feature type="binding site" evidence="1">
    <location>
        <begin position="586"/>
        <end position="590"/>
    </location>
    <ligand>
        <name>substrate</name>
    </ligand>
</feature>
<feature type="binding site" evidence="1">
    <location>
        <position position="587"/>
    </location>
    <ligand>
        <name>a divalent metal cation</name>
        <dbReference type="ChEBI" id="CHEBI:60240"/>
    </ligand>
</feature>
<feature type="binding site" evidence="1">
    <location>
        <position position="659"/>
    </location>
    <ligand>
        <name>substrate</name>
    </ligand>
</feature>
<feature type="binding site" description="via carbamate group" evidence="1">
    <location>
        <position position="755"/>
    </location>
    <ligand>
        <name>a divalent metal cation</name>
        <dbReference type="ChEBI" id="CHEBI:60240"/>
    </ligand>
</feature>
<feature type="binding site" evidence="1">
    <location>
        <position position="785"/>
    </location>
    <ligand>
        <name>a divalent metal cation</name>
        <dbReference type="ChEBI" id="CHEBI:60240"/>
    </ligand>
</feature>
<feature type="binding site" evidence="1">
    <location>
        <position position="787"/>
    </location>
    <ligand>
        <name>a divalent metal cation</name>
        <dbReference type="ChEBI" id="CHEBI:60240"/>
    </ligand>
</feature>
<feature type="binding site" evidence="1">
    <location>
        <position position="920"/>
    </location>
    <ligand>
        <name>substrate</name>
    </ligand>
</feature>
<feature type="modified residue" description="N6-carboxylysine" evidence="1">
    <location>
        <position position="755"/>
    </location>
</feature>
<feature type="modified residue" description="N6-biotinyllysine" evidence="1 3">
    <location>
        <position position="1156"/>
    </location>
</feature>
<dbReference type="EC" id="6.4.1.1"/>
<dbReference type="EMBL" id="AJ009972">
    <property type="protein sequence ID" value="CAC19838.1"/>
    <property type="molecule type" value="Genomic_DNA"/>
</dbReference>
<dbReference type="SMR" id="Q9HES8"/>
<dbReference type="PaxDb" id="5061-CADANGAP00003832"/>
<dbReference type="VEuPathDB" id="FungiDB:An04g02090"/>
<dbReference type="VEuPathDB" id="FungiDB:ASPNIDRAFT2_1031996"/>
<dbReference type="VEuPathDB" id="FungiDB:ATCC64974_78120"/>
<dbReference type="VEuPathDB" id="FungiDB:M747DRAFT_295217"/>
<dbReference type="eggNOG" id="KOG0369">
    <property type="taxonomic scope" value="Eukaryota"/>
</dbReference>
<dbReference type="UniPathway" id="UPA00138"/>
<dbReference type="GO" id="GO:0005737">
    <property type="term" value="C:cytoplasm"/>
    <property type="evidence" value="ECO:0007669"/>
    <property type="project" value="UniProtKB-SubCell"/>
</dbReference>
<dbReference type="GO" id="GO:0005524">
    <property type="term" value="F:ATP binding"/>
    <property type="evidence" value="ECO:0007669"/>
    <property type="project" value="UniProtKB-KW"/>
</dbReference>
<dbReference type="GO" id="GO:0046872">
    <property type="term" value="F:metal ion binding"/>
    <property type="evidence" value="ECO:0007669"/>
    <property type="project" value="UniProtKB-KW"/>
</dbReference>
<dbReference type="GO" id="GO:0004736">
    <property type="term" value="F:pyruvate carboxylase activity"/>
    <property type="evidence" value="ECO:0007669"/>
    <property type="project" value="UniProtKB-EC"/>
</dbReference>
<dbReference type="GO" id="GO:0006094">
    <property type="term" value="P:gluconeogenesis"/>
    <property type="evidence" value="ECO:0007669"/>
    <property type="project" value="UniProtKB-UniPathway"/>
</dbReference>
<dbReference type="CDD" id="cd06850">
    <property type="entry name" value="biotinyl_domain"/>
    <property type="match status" value="1"/>
</dbReference>
<dbReference type="CDD" id="cd07937">
    <property type="entry name" value="DRE_TIM_PC_TC_5S"/>
    <property type="match status" value="1"/>
</dbReference>
<dbReference type="FunFam" id="2.40.50.100:FF:000003">
    <property type="entry name" value="Acetyl-CoA carboxylase biotin carboxyl carrier protein"/>
    <property type="match status" value="1"/>
</dbReference>
<dbReference type="FunFam" id="3.30.1490.20:FF:000018">
    <property type="entry name" value="Biotin carboxylase"/>
    <property type="match status" value="1"/>
</dbReference>
<dbReference type="FunFam" id="3.40.50.20:FF:000010">
    <property type="entry name" value="Propionyl-CoA carboxylase subunit alpha"/>
    <property type="match status" value="1"/>
</dbReference>
<dbReference type="FunFam" id="3.10.600.10:FF:000002">
    <property type="entry name" value="Pyruvate carboxylase"/>
    <property type="match status" value="1"/>
</dbReference>
<dbReference type="FunFam" id="3.20.20.70:FF:000033">
    <property type="entry name" value="Pyruvate carboxylase"/>
    <property type="match status" value="1"/>
</dbReference>
<dbReference type="FunFam" id="3.30.470.20:FF:000012">
    <property type="entry name" value="Pyruvate carboxylase"/>
    <property type="match status" value="1"/>
</dbReference>
<dbReference type="Gene3D" id="2.40.50.100">
    <property type="match status" value="1"/>
</dbReference>
<dbReference type="Gene3D" id="3.20.20.70">
    <property type="entry name" value="Aldolase class I"/>
    <property type="match status" value="1"/>
</dbReference>
<dbReference type="Gene3D" id="3.30.470.20">
    <property type="entry name" value="ATP-grasp fold, B domain"/>
    <property type="match status" value="1"/>
</dbReference>
<dbReference type="Gene3D" id="3.10.600.10">
    <property type="entry name" value="pyruvate carboxylase f1077a mutant domain"/>
    <property type="match status" value="1"/>
</dbReference>
<dbReference type="InterPro" id="IPR013785">
    <property type="entry name" value="Aldolase_TIM"/>
</dbReference>
<dbReference type="InterPro" id="IPR011761">
    <property type="entry name" value="ATP-grasp"/>
</dbReference>
<dbReference type="InterPro" id="IPR005481">
    <property type="entry name" value="BC-like_N"/>
</dbReference>
<dbReference type="InterPro" id="IPR001882">
    <property type="entry name" value="Biotin_BS"/>
</dbReference>
<dbReference type="InterPro" id="IPR011764">
    <property type="entry name" value="Biotin_carboxylation_dom"/>
</dbReference>
<dbReference type="InterPro" id="IPR005482">
    <property type="entry name" value="Biotin_COase_C"/>
</dbReference>
<dbReference type="InterPro" id="IPR000089">
    <property type="entry name" value="Biotin_lipoyl"/>
</dbReference>
<dbReference type="InterPro" id="IPR003379">
    <property type="entry name" value="Carboxylase_cons_dom"/>
</dbReference>
<dbReference type="InterPro" id="IPR005479">
    <property type="entry name" value="CbamoylP_synth_lsu-like_ATP-bd"/>
</dbReference>
<dbReference type="InterPro" id="IPR055268">
    <property type="entry name" value="PCB-like"/>
</dbReference>
<dbReference type="InterPro" id="IPR016185">
    <property type="entry name" value="PreATP-grasp_dom_sf"/>
</dbReference>
<dbReference type="InterPro" id="IPR000891">
    <property type="entry name" value="PYR_CT"/>
</dbReference>
<dbReference type="InterPro" id="IPR005930">
    <property type="entry name" value="Pyruv_COase"/>
</dbReference>
<dbReference type="InterPro" id="IPR011054">
    <property type="entry name" value="Rudment_hybrid_motif"/>
</dbReference>
<dbReference type="InterPro" id="IPR011053">
    <property type="entry name" value="Single_hybrid_motif"/>
</dbReference>
<dbReference type="NCBIfam" id="NF006761">
    <property type="entry name" value="PRK09282.1"/>
    <property type="match status" value="1"/>
</dbReference>
<dbReference type="NCBIfam" id="NF009554">
    <property type="entry name" value="PRK12999.1"/>
    <property type="match status" value="1"/>
</dbReference>
<dbReference type="NCBIfam" id="TIGR01235">
    <property type="entry name" value="pyruv_carbox"/>
    <property type="match status" value="1"/>
</dbReference>
<dbReference type="PANTHER" id="PTHR43778">
    <property type="entry name" value="PYRUVATE CARBOXYLASE"/>
    <property type="match status" value="1"/>
</dbReference>
<dbReference type="PANTHER" id="PTHR43778:SF2">
    <property type="entry name" value="PYRUVATE CARBOXYLASE, MITOCHONDRIAL"/>
    <property type="match status" value="1"/>
</dbReference>
<dbReference type="Pfam" id="PF02785">
    <property type="entry name" value="Biotin_carb_C"/>
    <property type="match status" value="1"/>
</dbReference>
<dbReference type="Pfam" id="PF00289">
    <property type="entry name" value="Biotin_carb_N"/>
    <property type="match status" value="1"/>
</dbReference>
<dbReference type="Pfam" id="PF00364">
    <property type="entry name" value="Biotin_lipoyl"/>
    <property type="match status" value="1"/>
</dbReference>
<dbReference type="Pfam" id="PF02786">
    <property type="entry name" value="CPSase_L_D2"/>
    <property type="match status" value="1"/>
</dbReference>
<dbReference type="Pfam" id="PF00682">
    <property type="entry name" value="HMGL-like"/>
    <property type="match status" value="1"/>
</dbReference>
<dbReference type="Pfam" id="PF02436">
    <property type="entry name" value="PYC_OADA"/>
    <property type="match status" value="1"/>
</dbReference>
<dbReference type="PIRSF" id="PIRSF001594">
    <property type="entry name" value="Pyruv_carbox"/>
    <property type="match status" value="1"/>
</dbReference>
<dbReference type="SMART" id="SM00878">
    <property type="entry name" value="Biotin_carb_C"/>
    <property type="match status" value="1"/>
</dbReference>
<dbReference type="SUPFAM" id="SSF51569">
    <property type="entry name" value="Aldolase"/>
    <property type="match status" value="1"/>
</dbReference>
<dbReference type="SUPFAM" id="SSF56059">
    <property type="entry name" value="Glutathione synthetase ATP-binding domain-like"/>
    <property type="match status" value="1"/>
</dbReference>
<dbReference type="SUPFAM" id="SSF89000">
    <property type="entry name" value="post-HMGL domain-like"/>
    <property type="match status" value="1"/>
</dbReference>
<dbReference type="SUPFAM" id="SSF52440">
    <property type="entry name" value="PreATP-grasp domain"/>
    <property type="match status" value="1"/>
</dbReference>
<dbReference type="SUPFAM" id="SSF51246">
    <property type="entry name" value="Rudiment single hybrid motif"/>
    <property type="match status" value="1"/>
</dbReference>
<dbReference type="SUPFAM" id="SSF51230">
    <property type="entry name" value="Single hybrid motif"/>
    <property type="match status" value="1"/>
</dbReference>
<dbReference type="PROSITE" id="PS50975">
    <property type="entry name" value="ATP_GRASP"/>
    <property type="match status" value="1"/>
</dbReference>
<dbReference type="PROSITE" id="PS50979">
    <property type="entry name" value="BC"/>
    <property type="match status" value="1"/>
</dbReference>
<dbReference type="PROSITE" id="PS00188">
    <property type="entry name" value="BIOTIN"/>
    <property type="match status" value="1"/>
</dbReference>
<dbReference type="PROSITE" id="PS50968">
    <property type="entry name" value="BIOTINYL_LIPOYL"/>
    <property type="match status" value="1"/>
</dbReference>
<dbReference type="PROSITE" id="PS00866">
    <property type="entry name" value="CPSASE_1"/>
    <property type="match status" value="1"/>
</dbReference>
<dbReference type="PROSITE" id="PS00867">
    <property type="entry name" value="CPSASE_2"/>
    <property type="match status" value="1"/>
</dbReference>
<dbReference type="PROSITE" id="PS50991">
    <property type="entry name" value="PYR_CT"/>
    <property type="match status" value="1"/>
</dbReference>
<keyword id="KW-0067">ATP-binding</keyword>
<keyword id="KW-0092">Biotin</keyword>
<keyword id="KW-0963">Cytoplasm</keyword>
<keyword id="KW-0312">Gluconeogenesis</keyword>
<keyword id="KW-0436">Ligase</keyword>
<keyword id="KW-0479">Metal-binding</keyword>
<keyword id="KW-0511">Multifunctional enzyme</keyword>
<keyword id="KW-0547">Nucleotide-binding</keyword>
<keyword id="KW-0670">Pyruvate</keyword>
<keyword id="KW-0862">Zinc</keyword>
<accession>Q9HES8</accession>
<protein>
    <recommendedName>
        <fullName>Pyruvate carboxylase</fullName>
        <ecNumber>6.4.1.1</ecNumber>
    </recommendedName>
    <alternativeName>
        <fullName>Pyruvic carboxylase</fullName>
        <shortName>PCB</shortName>
    </alternativeName>
</protein>
<name>PYC_ASPNG</name>
<proteinExistence type="inferred from homology"/>
<evidence type="ECO:0000250" key="1"/>
<evidence type="ECO:0000255" key="2">
    <source>
        <dbReference type="PROSITE-ProRule" id="PRU00409"/>
    </source>
</evidence>
<evidence type="ECO:0000255" key="3">
    <source>
        <dbReference type="PROSITE-ProRule" id="PRU01066"/>
    </source>
</evidence>
<evidence type="ECO:0000255" key="4">
    <source>
        <dbReference type="PROSITE-ProRule" id="PRU01151"/>
    </source>
</evidence>
<evidence type="ECO:0000256" key="5">
    <source>
        <dbReference type="SAM" id="MobiDB-lite"/>
    </source>
</evidence>